<sequence>YQTSSPGSNITIGPL</sequence>
<accession>C0HJC8</accession>
<reference evidence="5" key="1">
    <citation type="journal article" date="2014" name="Acta Vet. Scand.">
        <title>Identification of pregnancy-associated glycoproteins and alpha-fetoprotein in fallow deer (Dama dama) placenta.</title>
        <authorList>
            <person name="Beriot M."/>
            <person name="Tchimbou A.F."/>
            <person name="Barbato O."/>
            <person name="Beckers J.F."/>
            <person name="de Sousa N.M."/>
        </authorList>
    </citation>
    <scope>PROTEIN SEQUENCE</scope>
    <scope>TISSUE SPECIFICITY</scope>
    <source>
        <tissue evidence="4">Fetal cotyledon</tissue>
    </source>
</reference>
<feature type="chain" id="PRO_0000423391" description="Pregnancy-associated glycoprotein 56B" evidence="3">
    <location>
        <begin position="1"/>
        <end position="15" status="greater than"/>
    </location>
</feature>
<feature type="non-terminal residue" evidence="4">
    <location>
        <position position="15"/>
    </location>
</feature>
<organism>
    <name type="scientific">Dama dama</name>
    <name type="common">Fallow deer</name>
    <name type="synonym">Cervus dama</name>
    <dbReference type="NCBI Taxonomy" id="30532"/>
    <lineage>
        <taxon>Eukaryota</taxon>
        <taxon>Metazoa</taxon>
        <taxon>Chordata</taxon>
        <taxon>Craniata</taxon>
        <taxon>Vertebrata</taxon>
        <taxon>Euteleostomi</taxon>
        <taxon>Mammalia</taxon>
        <taxon>Eutheria</taxon>
        <taxon>Laurasiatheria</taxon>
        <taxon>Artiodactyla</taxon>
        <taxon>Ruminantia</taxon>
        <taxon>Pecora</taxon>
        <taxon>Cervidae</taxon>
        <taxon>Cervinae</taxon>
        <taxon>Dama</taxon>
    </lineage>
</organism>
<keyword id="KW-0064">Aspartyl protease</keyword>
<keyword id="KW-0903">Direct protein sequencing</keyword>
<keyword id="KW-0378">Hydrolase</keyword>
<keyword id="KW-0645">Protease</keyword>
<keyword id="KW-0964">Secreted</keyword>
<name>PA56B_DAMDA</name>
<dbReference type="GO" id="GO:0005576">
    <property type="term" value="C:extracellular region"/>
    <property type="evidence" value="ECO:0007669"/>
    <property type="project" value="UniProtKB-SubCell"/>
</dbReference>
<dbReference type="GO" id="GO:0004190">
    <property type="term" value="F:aspartic-type endopeptidase activity"/>
    <property type="evidence" value="ECO:0007669"/>
    <property type="project" value="UniProtKB-KW"/>
</dbReference>
<dbReference type="GO" id="GO:0006508">
    <property type="term" value="P:proteolysis"/>
    <property type="evidence" value="ECO:0007669"/>
    <property type="project" value="UniProtKB-KW"/>
</dbReference>
<comment type="subcellular location">
    <subcellularLocation>
        <location evidence="1">Secreted</location>
        <location evidence="1">Extracellular space</location>
    </subcellularLocation>
</comment>
<comment type="tissue specificity">
    <text evidence="3">Expressed in placenta, specifically the fetal cotyledonary tissue (FCT) (at protein level).</text>
</comment>
<comment type="similarity">
    <text evidence="2">Belongs to the peptidase A1 family.</text>
</comment>
<evidence type="ECO:0000250" key="1">
    <source>
        <dbReference type="UniProtKB" id="Q29432"/>
    </source>
</evidence>
<evidence type="ECO:0000255" key="2"/>
<evidence type="ECO:0000269" key="3">
    <source>
    </source>
</evidence>
<evidence type="ECO:0000303" key="4">
    <source>
    </source>
</evidence>
<evidence type="ECO:0000305" key="5"/>
<proteinExistence type="evidence at protein level"/>
<protein>
    <recommendedName>
        <fullName evidence="4">Pregnancy-associated glycoprotein 56B</fullName>
        <shortName evidence="4">FdPAG56B</shortName>
    </recommendedName>
</protein>